<proteinExistence type="inferred from homology"/>
<evidence type="ECO:0000255" key="1">
    <source>
        <dbReference type="HAMAP-Rule" id="MF_00526"/>
    </source>
</evidence>
<gene>
    <name evidence="1" type="primary">glmS</name>
    <name type="synonym">mamA</name>
    <name type="ordered locus">YE4040</name>
</gene>
<comment type="function">
    <text evidence="1">Catalyzes the carbon skeleton rearrangement of L-glutamate to L-threo-3-methylaspartate ((2S,3S)-3-methylaspartate).</text>
</comment>
<comment type="catalytic activity">
    <reaction evidence="1">
        <text>(2S,3S)-3-methyl-L-aspartate = L-glutamate</text>
        <dbReference type="Rhea" id="RHEA:12857"/>
        <dbReference type="ChEBI" id="CHEBI:29985"/>
        <dbReference type="ChEBI" id="CHEBI:58724"/>
        <dbReference type="EC" id="5.4.99.1"/>
    </reaction>
</comment>
<comment type="cofactor">
    <cofactor evidence="1">
        <name>adenosylcob(III)alamin</name>
        <dbReference type="ChEBI" id="CHEBI:18408"/>
    </cofactor>
</comment>
<comment type="pathway">
    <text evidence="1">Amino-acid degradation; L-glutamate degradation via mesaconate pathway; acetate and pyruvate from L-glutamate: step 1/4.</text>
</comment>
<comment type="subunit">
    <text evidence="1">Heterotetramer composed of 2 epsilon subunits (GlmE) and 2 sigma subunits (GlmS). GlmE exists as a homodimer and GlmS as a monomer.</text>
</comment>
<comment type="similarity">
    <text evidence="1">Belongs to the methylaspartate mutase GlmS subunit family.</text>
</comment>
<reference key="1">
    <citation type="journal article" date="2006" name="PLoS Genet.">
        <title>The complete genome sequence and comparative genome analysis of the high pathogenicity Yersinia enterocolitica strain 8081.</title>
        <authorList>
            <person name="Thomson N.R."/>
            <person name="Howard S."/>
            <person name="Wren B.W."/>
            <person name="Holden M.T.G."/>
            <person name="Crossman L."/>
            <person name="Challis G.L."/>
            <person name="Churcher C."/>
            <person name="Mungall K."/>
            <person name="Brooks K."/>
            <person name="Chillingworth T."/>
            <person name="Feltwell T."/>
            <person name="Abdellah Z."/>
            <person name="Hauser H."/>
            <person name="Jagels K."/>
            <person name="Maddison M."/>
            <person name="Moule S."/>
            <person name="Sanders M."/>
            <person name="Whitehead S."/>
            <person name="Quail M.A."/>
            <person name="Dougan G."/>
            <person name="Parkhill J."/>
            <person name="Prentice M.B."/>
        </authorList>
    </citation>
    <scope>NUCLEOTIDE SEQUENCE [LARGE SCALE GENOMIC DNA]</scope>
    <source>
        <strain>NCTC 13174 / 8081</strain>
    </source>
</reference>
<accession>A1JSN5</accession>
<dbReference type="EC" id="5.4.99.1" evidence="1"/>
<dbReference type="EMBL" id="AM286415">
    <property type="protein sequence ID" value="CAL14058.1"/>
    <property type="molecule type" value="Genomic_DNA"/>
</dbReference>
<dbReference type="RefSeq" id="WP_011817374.1">
    <property type="nucleotide sequence ID" value="NC_008800.1"/>
</dbReference>
<dbReference type="RefSeq" id="YP_001008182.1">
    <property type="nucleotide sequence ID" value="NC_008800.1"/>
</dbReference>
<dbReference type="SMR" id="A1JSN5"/>
<dbReference type="KEGG" id="yen:YE4040"/>
<dbReference type="PATRIC" id="fig|393305.7.peg.4301"/>
<dbReference type="eggNOG" id="COG2185">
    <property type="taxonomic scope" value="Bacteria"/>
</dbReference>
<dbReference type="HOGENOM" id="CLU_136705_0_0_6"/>
<dbReference type="OrthoDB" id="9791348at2"/>
<dbReference type="UniPathway" id="UPA00561">
    <property type="reaction ID" value="UER00617"/>
</dbReference>
<dbReference type="Proteomes" id="UP000000642">
    <property type="component" value="Chromosome"/>
</dbReference>
<dbReference type="GO" id="GO:0031419">
    <property type="term" value="F:cobalamin binding"/>
    <property type="evidence" value="ECO:0007669"/>
    <property type="project" value="UniProtKB-KW"/>
</dbReference>
<dbReference type="GO" id="GO:0046872">
    <property type="term" value="F:metal ion binding"/>
    <property type="evidence" value="ECO:0007669"/>
    <property type="project" value="UniProtKB-KW"/>
</dbReference>
<dbReference type="GO" id="GO:0050097">
    <property type="term" value="F:methylaspartate mutase activity"/>
    <property type="evidence" value="ECO:0007669"/>
    <property type="project" value="UniProtKB-UniRule"/>
</dbReference>
<dbReference type="GO" id="GO:0019670">
    <property type="term" value="P:anaerobic glutamate catabolic process"/>
    <property type="evidence" value="ECO:0007669"/>
    <property type="project" value="InterPro"/>
</dbReference>
<dbReference type="GO" id="GO:0019553">
    <property type="term" value="P:glutamate catabolic process via L-citramalate"/>
    <property type="evidence" value="ECO:0007669"/>
    <property type="project" value="UniProtKB-UniRule"/>
</dbReference>
<dbReference type="CDD" id="cd02072">
    <property type="entry name" value="Glm_B12_BD"/>
    <property type="match status" value="1"/>
</dbReference>
<dbReference type="Gene3D" id="3.40.50.280">
    <property type="entry name" value="Cobalamin-binding domain"/>
    <property type="match status" value="1"/>
</dbReference>
<dbReference type="HAMAP" id="MF_00526">
    <property type="entry name" value="Me_Asp_mutase_S"/>
    <property type="match status" value="1"/>
</dbReference>
<dbReference type="InterPro" id="IPR006158">
    <property type="entry name" value="Cobalamin-bd"/>
</dbReference>
<dbReference type="InterPro" id="IPR036724">
    <property type="entry name" value="Cobalamin-bd_sf"/>
</dbReference>
<dbReference type="InterPro" id="IPR006394">
    <property type="entry name" value="GlmS"/>
</dbReference>
<dbReference type="NCBIfam" id="TIGR01501">
    <property type="entry name" value="MthylAspMutase"/>
    <property type="match status" value="1"/>
</dbReference>
<dbReference type="NCBIfam" id="NF002612">
    <property type="entry name" value="PRK02261.1"/>
    <property type="match status" value="1"/>
</dbReference>
<dbReference type="Pfam" id="PF02310">
    <property type="entry name" value="B12-binding"/>
    <property type="match status" value="1"/>
</dbReference>
<dbReference type="SUPFAM" id="SSF52242">
    <property type="entry name" value="Cobalamin (vitamin B12)-binding domain"/>
    <property type="match status" value="1"/>
</dbReference>
<dbReference type="PROSITE" id="PS51332">
    <property type="entry name" value="B12_BINDING"/>
    <property type="match status" value="1"/>
</dbReference>
<sequence>MQNPTIVIGVIGADCHAVGNKVLDRVFTMHNFSVINLGVMVSQDEYIDAAIETGAQAIVVSSIYGHGEVDCIGMRENCVERGIGEILLYVGGNLVIGKHDFSEIETKFKGMGFNRVFAPDTDLELVCSLMKRDIERVMQSEEAPEGMQ</sequence>
<feature type="chain" id="PRO_0000303108" description="Glutamate mutase sigma subunit">
    <location>
        <begin position="1"/>
        <end position="148"/>
    </location>
</feature>
<feature type="domain" description="B12-binding" evidence="1">
    <location>
        <begin position="3"/>
        <end position="140"/>
    </location>
</feature>
<feature type="binding site" evidence="1">
    <location>
        <begin position="13"/>
        <end position="17"/>
    </location>
    <ligand>
        <name>adenosylcob(III)alamin</name>
        <dbReference type="ChEBI" id="CHEBI:18408"/>
    </ligand>
</feature>
<feature type="binding site" description="axial binding residue" evidence="1">
    <location>
        <position position="16"/>
    </location>
    <ligand>
        <name>adenosylcob(III)alamin</name>
        <dbReference type="ChEBI" id="CHEBI:18408"/>
    </ligand>
    <ligandPart>
        <name>Co</name>
        <dbReference type="ChEBI" id="CHEBI:27638"/>
    </ligandPart>
</feature>
<feature type="binding site" evidence="1">
    <location>
        <begin position="61"/>
        <end position="63"/>
    </location>
    <ligand>
        <name>adenosylcob(III)alamin</name>
        <dbReference type="ChEBI" id="CHEBI:18408"/>
    </ligand>
</feature>
<feature type="binding site" evidence="1">
    <location>
        <begin position="93"/>
        <end position="97"/>
    </location>
    <ligand>
        <name>adenosylcob(III)alamin</name>
        <dbReference type="ChEBI" id="CHEBI:18408"/>
    </ligand>
</feature>
<protein>
    <recommendedName>
        <fullName evidence="1">Glutamate mutase sigma subunit</fullName>
        <ecNumber evidence="1">5.4.99.1</ecNumber>
    </recommendedName>
    <alternativeName>
        <fullName evidence="1">Glutamate mutase S chain</fullName>
    </alternativeName>
    <alternativeName>
        <fullName evidence="1">Glutamate mutase small subunit</fullName>
    </alternativeName>
    <alternativeName>
        <fullName evidence="1">Methylaspartate mutase</fullName>
    </alternativeName>
</protein>
<organism>
    <name type="scientific">Yersinia enterocolitica serotype O:8 / biotype 1B (strain NCTC 13174 / 8081)</name>
    <dbReference type="NCBI Taxonomy" id="393305"/>
    <lineage>
        <taxon>Bacteria</taxon>
        <taxon>Pseudomonadati</taxon>
        <taxon>Pseudomonadota</taxon>
        <taxon>Gammaproteobacteria</taxon>
        <taxon>Enterobacterales</taxon>
        <taxon>Yersiniaceae</taxon>
        <taxon>Yersinia</taxon>
    </lineage>
</organism>
<keyword id="KW-0846">Cobalamin</keyword>
<keyword id="KW-0170">Cobalt</keyword>
<keyword id="KW-0413">Isomerase</keyword>
<keyword id="KW-0479">Metal-binding</keyword>
<name>GMSS_YERE8</name>